<feature type="chain" id="PRO_0000145665" description="Glyceraldehyde-3-phosphate dehydrogenase">
    <location>
        <begin position="1"/>
        <end position="338"/>
    </location>
</feature>
<feature type="active site" description="Nucleophile" evidence="1">
    <location>
        <position position="156"/>
    </location>
</feature>
<feature type="binding site" evidence="1">
    <location>
        <begin position="12"/>
        <end position="13"/>
    </location>
    <ligand>
        <name>NAD(+)</name>
        <dbReference type="ChEBI" id="CHEBI:57540"/>
    </ligand>
</feature>
<feature type="binding site" evidence="1">
    <location>
        <position position="38"/>
    </location>
    <ligand>
        <name>NAD(+)</name>
        <dbReference type="ChEBI" id="CHEBI:57540"/>
    </ligand>
</feature>
<feature type="binding site" evidence="1">
    <location>
        <position position="125"/>
    </location>
    <ligand>
        <name>NAD(+)</name>
        <dbReference type="ChEBI" id="CHEBI:57540"/>
    </ligand>
</feature>
<feature type="binding site" evidence="1">
    <location>
        <begin position="155"/>
        <end position="157"/>
    </location>
    <ligand>
        <name>D-glyceraldehyde 3-phosphate</name>
        <dbReference type="ChEBI" id="CHEBI:59776"/>
    </ligand>
</feature>
<feature type="binding site" evidence="1">
    <location>
        <position position="186"/>
    </location>
    <ligand>
        <name>D-glyceraldehyde 3-phosphate</name>
        <dbReference type="ChEBI" id="CHEBI:59776"/>
    </ligand>
</feature>
<feature type="binding site" evidence="1">
    <location>
        <begin position="216"/>
        <end position="217"/>
    </location>
    <ligand>
        <name>D-glyceraldehyde 3-phosphate</name>
        <dbReference type="ChEBI" id="CHEBI:59776"/>
    </ligand>
</feature>
<feature type="binding site" evidence="1">
    <location>
        <position position="239"/>
    </location>
    <ligand>
        <name>D-glyceraldehyde 3-phosphate</name>
        <dbReference type="ChEBI" id="CHEBI:59776"/>
    </ligand>
</feature>
<feature type="binding site" evidence="1">
    <location>
        <position position="320"/>
    </location>
    <ligand>
        <name>NAD(+)</name>
        <dbReference type="ChEBI" id="CHEBI:57540"/>
    </ligand>
</feature>
<feature type="site" description="Activates thiol group during catalysis" evidence="3">
    <location>
        <position position="183"/>
    </location>
</feature>
<evidence type="ECO:0000250" key="1">
    <source>
        <dbReference type="UniProtKB" id="P00362"/>
    </source>
</evidence>
<evidence type="ECO:0000250" key="2">
    <source>
        <dbReference type="UniProtKB" id="P09124"/>
    </source>
</evidence>
<evidence type="ECO:0000250" key="3">
    <source>
        <dbReference type="UniProtKB" id="Q6GIL8"/>
    </source>
</evidence>
<evidence type="ECO:0000305" key="4"/>
<accession>O32755</accession>
<dbReference type="EC" id="1.2.1.12" evidence="2"/>
<dbReference type="EMBL" id="AJ000339">
    <property type="protein sequence ID" value="CAA04014.1"/>
    <property type="molecule type" value="Genomic_DNA"/>
</dbReference>
<dbReference type="PIR" id="T09633">
    <property type="entry name" value="T09633"/>
</dbReference>
<dbReference type="RefSeq" id="WP_011543735.1">
    <property type="nucleotide sequence ID" value="NZ_RISL01000002.1"/>
</dbReference>
<dbReference type="SMR" id="O32755"/>
<dbReference type="BioCyc" id="MetaCyc:MONOMER-13052"/>
<dbReference type="UniPathway" id="UPA00109">
    <property type="reaction ID" value="UER00184"/>
</dbReference>
<dbReference type="GO" id="GO:0005737">
    <property type="term" value="C:cytoplasm"/>
    <property type="evidence" value="ECO:0007669"/>
    <property type="project" value="UniProtKB-SubCell"/>
</dbReference>
<dbReference type="GO" id="GO:0004365">
    <property type="term" value="F:glyceraldehyde-3-phosphate dehydrogenase (NAD+) (phosphorylating) activity"/>
    <property type="evidence" value="ECO:0000250"/>
    <property type="project" value="UniProtKB"/>
</dbReference>
<dbReference type="GO" id="GO:0051287">
    <property type="term" value="F:NAD binding"/>
    <property type="evidence" value="ECO:0000250"/>
    <property type="project" value="UniProtKB"/>
</dbReference>
<dbReference type="GO" id="GO:0050661">
    <property type="term" value="F:NADP binding"/>
    <property type="evidence" value="ECO:0007669"/>
    <property type="project" value="InterPro"/>
</dbReference>
<dbReference type="GO" id="GO:0006006">
    <property type="term" value="P:glucose metabolic process"/>
    <property type="evidence" value="ECO:0007669"/>
    <property type="project" value="InterPro"/>
</dbReference>
<dbReference type="GO" id="GO:0006096">
    <property type="term" value="P:glycolytic process"/>
    <property type="evidence" value="ECO:0007669"/>
    <property type="project" value="UniProtKB-UniPathway"/>
</dbReference>
<dbReference type="CDD" id="cd18126">
    <property type="entry name" value="GAPDH_I_C"/>
    <property type="match status" value="1"/>
</dbReference>
<dbReference type="CDD" id="cd05214">
    <property type="entry name" value="GAPDH_I_N"/>
    <property type="match status" value="1"/>
</dbReference>
<dbReference type="FunFam" id="3.30.360.10:FF:000002">
    <property type="entry name" value="Glyceraldehyde-3-phosphate dehydrogenase"/>
    <property type="match status" value="1"/>
</dbReference>
<dbReference type="FunFam" id="3.40.50.720:FF:000001">
    <property type="entry name" value="Glyceraldehyde-3-phosphate dehydrogenase"/>
    <property type="match status" value="1"/>
</dbReference>
<dbReference type="Gene3D" id="3.30.360.10">
    <property type="entry name" value="Dihydrodipicolinate Reductase, domain 2"/>
    <property type="match status" value="1"/>
</dbReference>
<dbReference type="Gene3D" id="3.40.50.720">
    <property type="entry name" value="NAD(P)-binding Rossmann-like Domain"/>
    <property type="match status" value="1"/>
</dbReference>
<dbReference type="InterPro" id="IPR020831">
    <property type="entry name" value="GlycerAld/Erythrose_P_DH"/>
</dbReference>
<dbReference type="InterPro" id="IPR020829">
    <property type="entry name" value="GlycerAld_3-P_DH_cat"/>
</dbReference>
<dbReference type="InterPro" id="IPR020828">
    <property type="entry name" value="GlycerAld_3-P_DH_NAD(P)-bd"/>
</dbReference>
<dbReference type="InterPro" id="IPR006424">
    <property type="entry name" value="Glyceraldehyde-3-P_DH_1"/>
</dbReference>
<dbReference type="InterPro" id="IPR036291">
    <property type="entry name" value="NAD(P)-bd_dom_sf"/>
</dbReference>
<dbReference type="NCBIfam" id="TIGR01534">
    <property type="entry name" value="GAPDH-I"/>
    <property type="match status" value="1"/>
</dbReference>
<dbReference type="PANTHER" id="PTHR43148">
    <property type="entry name" value="GLYCERALDEHYDE-3-PHOSPHATE DEHYDROGENASE 2"/>
    <property type="match status" value="1"/>
</dbReference>
<dbReference type="Pfam" id="PF02800">
    <property type="entry name" value="Gp_dh_C"/>
    <property type="match status" value="1"/>
</dbReference>
<dbReference type="Pfam" id="PF00044">
    <property type="entry name" value="Gp_dh_N"/>
    <property type="match status" value="1"/>
</dbReference>
<dbReference type="PIRSF" id="PIRSF000149">
    <property type="entry name" value="GAP_DH"/>
    <property type="match status" value="1"/>
</dbReference>
<dbReference type="PRINTS" id="PR00078">
    <property type="entry name" value="G3PDHDRGNASE"/>
</dbReference>
<dbReference type="SMART" id="SM00846">
    <property type="entry name" value="Gp_dh_N"/>
    <property type="match status" value="1"/>
</dbReference>
<dbReference type="SUPFAM" id="SSF55347">
    <property type="entry name" value="Glyceraldehyde-3-phosphate dehydrogenase-like, C-terminal domain"/>
    <property type="match status" value="1"/>
</dbReference>
<dbReference type="SUPFAM" id="SSF51735">
    <property type="entry name" value="NAD(P)-binding Rossmann-fold domains"/>
    <property type="match status" value="1"/>
</dbReference>
<gene>
    <name type="primary">gap</name>
</gene>
<comment type="function">
    <text evidence="1">Catalyzes the oxidative phosphorylation of glyceraldehyde 3-phosphate (G3P) to 1,3-bisphosphoglycerate (BPG) using the cofactor NAD. The first reaction step involves the formation of a hemiacetal intermediate between G3P and a cysteine residue, and this hemiacetal intermediate is then oxidized to a thioester, with concomitant reduction of NAD to NADH. The reduced NADH is then exchanged with the second NAD, and the thioester is attacked by a nucleophilic inorganic phosphate to produce BPG.</text>
</comment>
<comment type="catalytic activity">
    <reaction evidence="2">
        <text>D-glyceraldehyde 3-phosphate + phosphate + NAD(+) = (2R)-3-phospho-glyceroyl phosphate + NADH + H(+)</text>
        <dbReference type="Rhea" id="RHEA:10300"/>
        <dbReference type="ChEBI" id="CHEBI:15378"/>
        <dbReference type="ChEBI" id="CHEBI:43474"/>
        <dbReference type="ChEBI" id="CHEBI:57540"/>
        <dbReference type="ChEBI" id="CHEBI:57604"/>
        <dbReference type="ChEBI" id="CHEBI:57945"/>
        <dbReference type="ChEBI" id="CHEBI:59776"/>
        <dbReference type="EC" id="1.2.1.12"/>
    </reaction>
</comment>
<comment type="pathway">
    <text evidence="4">Carbohydrate degradation; glycolysis; pyruvate from D-glyceraldehyde 3-phosphate: step 1/5.</text>
</comment>
<comment type="subunit">
    <text evidence="1">Homotetramer.</text>
</comment>
<comment type="subcellular location">
    <subcellularLocation>
        <location evidence="4">Cytoplasm</location>
    </subcellularLocation>
</comment>
<comment type="similarity">
    <text evidence="4">Belongs to the glyceraldehyde-3-phosphate dehydrogenase family.</text>
</comment>
<name>G3P_LACDE</name>
<reference key="1">
    <citation type="journal article" date="1998" name="Microbiology">
        <title>An operon encoding three glycolytic enzymes in Lactobacillus delbrueckii subsp. bulgaricus: glyceraldehyde-3-phosphate dehydrogenase, phosphoglycerate kinase and triosephosphate isomerase.</title>
        <authorList>
            <person name="Branny P."/>
            <person name="Delatorre F."/>
            <person name="Garel J.R."/>
        </authorList>
    </citation>
    <scope>NUCLEOTIDE SEQUENCE [GENOMIC DNA]</scope>
    <source>
        <strain>B107</strain>
    </source>
</reference>
<sequence length="338" mass="36564">MTVKIGINGFGRIGRLAFRRIMDLGEETKDIEVVAINDLTTPAMLAHLLKYDSTHGTFDHEVSATEDSLVVDGKKYRVYAEPQAQNIPWVKNDGVDFVLECTGFYTSKAKSQAHLDAGAKRVLISAPAGNDLKTIVYSVNQDTLTADDTIVSAGSCTTNSLAPMANALNKEFGIQVGTMTTIHAYTATQKVLDGPDRGNNFRNARAAAENIIPHSTGAAKAIGLVLPELNGKLDGHAQRVPVKDGSETELVTILDKKVTAEEVNAAMKKYESPSFAYNADQIVSTDVLGMTAGSIFDPTQTQVITAGDKQLVKTVAWYDNEYSFTCQMVRTLLHFATL</sequence>
<keyword id="KW-0963">Cytoplasm</keyword>
<keyword id="KW-0324">Glycolysis</keyword>
<keyword id="KW-0520">NAD</keyword>
<keyword id="KW-0547">Nucleotide-binding</keyword>
<keyword id="KW-0560">Oxidoreductase</keyword>
<protein>
    <recommendedName>
        <fullName evidence="1">Glyceraldehyde-3-phosphate dehydrogenase</fullName>
        <shortName evidence="1">GAPDH</shortName>
        <ecNumber evidence="2">1.2.1.12</ecNumber>
    </recommendedName>
    <alternativeName>
        <fullName evidence="1">NAD-dependent glyceraldehyde-3-phosphate dehydrogenase</fullName>
    </alternativeName>
</protein>
<organism>
    <name type="scientific">Lactobacillus delbrueckii subsp. bulgaricus</name>
    <dbReference type="NCBI Taxonomy" id="1585"/>
    <lineage>
        <taxon>Bacteria</taxon>
        <taxon>Bacillati</taxon>
        <taxon>Bacillota</taxon>
        <taxon>Bacilli</taxon>
        <taxon>Lactobacillales</taxon>
        <taxon>Lactobacillaceae</taxon>
        <taxon>Lactobacillus</taxon>
    </lineage>
</organism>
<proteinExistence type="inferred from homology"/>